<comment type="function">
    <text>NDH-1 shuttles electrons from NADH, via FMN and iron-sulfur (Fe-S) centers, to quinones in the respiratory chain. The immediate electron acceptor for the enzyme in this species is menaquinone. Couples the redox reaction to proton translocation (for every two electrons transferred, four hydrogen ions are translocated across the cytoplasmic membrane), and thus conserves the redox energy in a proton gradient required for the synthesis of ATP.</text>
</comment>
<comment type="catalytic activity">
    <reaction>
        <text>a quinone + NADH + 5 H(+)(in) = a quinol + NAD(+) + 4 H(+)(out)</text>
        <dbReference type="Rhea" id="RHEA:57888"/>
        <dbReference type="ChEBI" id="CHEBI:15378"/>
        <dbReference type="ChEBI" id="CHEBI:24646"/>
        <dbReference type="ChEBI" id="CHEBI:57540"/>
        <dbReference type="ChEBI" id="CHEBI:57945"/>
        <dbReference type="ChEBI" id="CHEBI:132124"/>
    </reaction>
</comment>
<comment type="subunit">
    <text>NDH-1 is composed of 15 different subunits, Nqo1 to Nqo15. The complex has a L-shaped structure, with the hydrophobic arm (subunits Nqo7, Nqo8 and Nqo10 to Nqo14) embedded in the membrane and the hydrophilic peripheral arm (subunits Nqo1 to Nqo6, Nqo9 and Nqo15) protruding into the bacterial cytoplasm. The hydrophilic domain contains all the redox centers.</text>
</comment>
<comment type="subcellular location">
    <subcellularLocation>
        <location>Cell inner membrane</location>
        <topology>Multi-pass membrane protein</topology>
    </subcellularLocation>
</comment>
<comment type="similarity">
    <text evidence="2">Belongs to the complex I subunit 4 family.</text>
</comment>
<proteinExistence type="evidence at protein level"/>
<evidence type="ECO:0000255" key="1"/>
<evidence type="ECO:0000305" key="2"/>
<evidence type="ECO:0007829" key="3">
    <source>
        <dbReference type="PDB" id="4HE8"/>
    </source>
</evidence>
<evidence type="ECO:0007829" key="4">
    <source>
        <dbReference type="PDB" id="6I1P"/>
    </source>
</evidence>
<evidence type="ECO:0007829" key="5">
    <source>
        <dbReference type="PDB" id="6Q8W"/>
    </source>
</evidence>
<evidence type="ECO:0007829" key="6">
    <source>
        <dbReference type="PDB" id="6Y11"/>
    </source>
</evidence>
<gene>
    <name type="primary">nqo13</name>
    <name type="ordered locus">TTHA0096</name>
</gene>
<dbReference type="EC" id="7.1.1.-"/>
<dbReference type="EMBL" id="U52917">
    <property type="protein sequence ID" value="AAA97950.1"/>
    <property type="molecule type" value="Genomic_DNA"/>
</dbReference>
<dbReference type="EMBL" id="AP008226">
    <property type="protein sequence ID" value="BAD69919.1"/>
    <property type="molecule type" value="Genomic_DNA"/>
</dbReference>
<dbReference type="PIR" id="T11910">
    <property type="entry name" value="T11910"/>
</dbReference>
<dbReference type="RefSeq" id="WP_011227706.1">
    <property type="nucleotide sequence ID" value="NC_006461.1"/>
</dbReference>
<dbReference type="RefSeq" id="YP_143362.1">
    <property type="nucleotide sequence ID" value="NC_006461.1"/>
</dbReference>
<dbReference type="PDB" id="4HE8">
    <property type="method" value="X-ray"/>
    <property type="resolution" value="3.30 A"/>
    <property type="chains" value="G/M=1-469"/>
</dbReference>
<dbReference type="PDB" id="4HEA">
    <property type="method" value="X-ray"/>
    <property type="resolution" value="3.30 A"/>
    <property type="chains" value="M/U=1-469"/>
</dbReference>
<dbReference type="PDB" id="6I0D">
    <property type="method" value="X-ray"/>
    <property type="resolution" value="3.60 A"/>
    <property type="chains" value="M/U=1-469"/>
</dbReference>
<dbReference type="PDB" id="6I1P">
    <property type="method" value="X-ray"/>
    <property type="resolution" value="3.21 A"/>
    <property type="chains" value="M/U=1-469"/>
</dbReference>
<dbReference type="PDB" id="6Q8O">
    <property type="method" value="X-ray"/>
    <property type="resolution" value="3.60 A"/>
    <property type="chains" value="M/U=1-469"/>
</dbReference>
<dbReference type="PDB" id="6Q8W">
    <property type="method" value="X-ray"/>
    <property type="resolution" value="3.40 A"/>
    <property type="chains" value="M/U=1-469"/>
</dbReference>
<dbReference type="PDB" id="6Q8X">
    <property type="method" value="X-ray"/>
    <property type="resolution" value="3.51 A"/>
    <property type="chains" value="M/U=1-469"/>
</dbReference>
<dbReference type="PDB" id="6Y11">
    <property type="method" value="X-ray"/>
    <property type="resolution" value="3.11 A"/>
    <property type="chains" value="M/U=1-469"/>
</dbReference>
<dbReference type="PDB" id="6ZIY">
    <property type="method" value="EM"/>
    <property type="resolution" value="4.25 A"/>
    <property type="chains" value="M=1-469"/>
</dbReference>
<dbReference type="PDB" id="6ZJL">
    <property type="method" value="EM"/>
    <property type="resolution" value="4.30 A"/>
    <property type="chains" value="M=1-469"/>
</dbReference>
<dbReference type="PDB" id="6ZJN">
    <property type="method" value="EM"/>
    <property type="resolution" value="6.10 A"/>
    <property type="chains" value="M=1-469"/>
</dbReference>
<dbReference type="PDB" id="6ZJY">
    <property type="method" value="EM"/>
    <property type="resolution" value="5.50 A"/>
    <property type="chains" value="M=1-469"/>
</dbReference>
<dbReference type="PDBsum" id="4HE8"/>
<dbReference type="PDBsum" id="4HEA"/>
<dbReference type="PDBsum" id="6I0D"/>
<dbReference type="PDBsum" id="6I1P"/>
<dbReference type="PDBsum" id="6Q8O"/>
<dbReference type="PDBsum" id="6Q8W"/>
<dbReference type="PDBsum" id="6Q8X"/>
<dbReference type="PDBsum" id="6Y11"/>
<dbReference type="PDBsum" id="6ZIY"/>
<dbReference type="PDBsum" id="6ZJL"/>
<dbReference type="PDBsum" id="6ZJN"/>
<dbReference type="PDBsum" id="6ZJY"/>
<dbReference type="EMDB" id="EMD-11231"/>
<dbReference type="EMDB" id="EMD-11235"/>
<dbReference type="EMDB" id="EMD-11237"/>
<dbReference type="EMDB" id="EMD-11238"/>
<dbReference type="SMR" id="Q56228"/>
<dbReference type="DIP" id="DIP-59271N"/>
<dbReference type="IntAct" id="Q56228">
    <property type="interactions" value="1"/>
</dbReference>
<dbReference type="TCDB" id="3.D.1.3.1">
    <property type="family name" value="the h+ or na+-translocating nadh dehydrogenase (ndh) family"/>
</dbReference>
<dbReference type="EnsemblBacteria" id="BAD69919">
    <property type="protein sequence ID" value="BAD69919"/>
    <property type="gene ID" value="BAD69919"/>
</dbReference>
<dbReference type="GeneID" id="3169618"/>
<dbReference type="KEGG" id="ttj:TTHA0096"/>
<dbReference type="PATRIC" id="fig|300852.9.peg.94"/>
<dbReference type="eggNOG" id="COG1008">
    <property type="taxonomic scope" value="Bacteria"/>
</dbReference>
<dbReference type="HOGENOM" id="CLU_007100_4_4_0"/>
<dbReference type="PhylomeDB" id="Q56228"/>
<dbReference type="EvolutionaryTrace" id="Q56228"/>
<dbReference type="Proteomes" id="UP000000532">
    <property type="component" value="Chromosome"/>
</dbReference>
<dbReference type="GO" id="GO:0005886">
    <property type="term" value="C:plasma membrane"/>
    <property type="evidence" value="ECO:0007669"/>
    <property type="project" value="UniProtKB-SubCell"/>
</dbReference>
<dbReference type="GO" id="GO:0008137">
    <property type="term" value="F:NADH dehydrogenase (ubiquinone) activity"/>
    <property type="evidence" value="ECO:0007669"/>
    <property type="project" value="InterPro"/>
</dbReference>
<dbReference type="GO" id="GO:0048039">
    <property type="term" value="F:ubiquinone binding"/>
    <property type="evidence" value="ECO:0007669"/>
    <property type="project" value="TreeGrafter"/>
</dbReference>
<dbReference type="GO" id="GO:0042773">
    <property type="term" value="P:ATP synthesis coupled electron transport"/>
    <property type="evidence" value="ECO:0007669"/>
    <property type="project" value="InterPro"/>
</dbReference>
<dbReference type="GO" id="GO:0015990">
    <property type="term" value="P:electron transport coupled proton transport"/>
    <property type="evidence" value="ECO:0007669"/>
    <property type="project" value="TreeGrafter"/>
</dbReference>
<dbReference type="InterPro" id="IPR010227">
    <property type="entry name" value="NADH_Q_OxRdtase_chainM/4"/>
</dbReference>
<dbReference type="InterPro" id="IPR003918">
    <property type="entry name" value="NADH_UbQ_OxRdtase"/>
</dbReference>
<dbReference type="InterPro" id="IPR001750">
    <property type="entry name" value="ND/Mrp_TM"/>
</dbReference>
<dbReference type="NCBIfam" id="TIGR01972">
    <property type="entry name" value="NDH_I_M"/>
    <property type="match status" value="1"/>
</dbReference>
<dbReference type="PANTHER" id="PTHR43507">
    <property type="entry name" value="NADH-UBIQUINONE OXIDOREDUCTASE CHAIN 4"/>
    <property type="match status" value="1"/>
</dbReference>
<dbReference type="PANTHER" id="PTHR43507:SF1">
    <property type="entry name" value="NADH-UBIQUINONE OXIDOREDUCTASE CHAIN 4"/>
    <property type="match status" value="1"/>
</dbReference>
<dbReference type="Pfam" id="PF00361">
    <property type="entry name" value="Proton_antipo_M"/>
    <property type="match status" value="1"/>
</dbReference>
<dbReference type="PRINTS" id="PR01437">
    <property type="entry name" value="NUOXDRDTASE4"/>
</dbReference>
<keyword id="KW-0002">3D-structure</keyword>
<keyword id="KW-0997">Cell inner membrane</keyword>
<keyword id="KW-1003">Cell membrane</keyword>
<keyword id="KW-0472">Membrane</keyword>
<keyword id="KW-0520">NAD</keyword>
<keyword id="KW-0874">Quinone</keyword>
<keyword id="KW-1185">Reference proteome</keyword>
<keyword id="KW-1278">Translocase</keyword>
<keyword id="KW-0812">Transmembrane</keyword>
<keyword id="KW-1133">Transmembrane helix</keyword>
<reference key="1">
    <citation type="journal article" date="1997" name="J. Biol. Chem.">
        <title>The proton-translocating NADH-quinone oxidoreductase (NDH-1) of thermophilic bacterium Thermus thermophilus HB-8. Complete DNA sequence of the gene cluster and thermostable properties of the expressed NQO2 subunit.</title>
        <authorList>
            <person name="Yano T."/>
            <person name="Chu S.S."/>
            <person name="Sled' V.D."/>
            <person name="Ohnishi T."/>
            <person name="Yagi T."/>
        </authorList>
    </citation>
    <scope>NUCLEOTIDE SEQUENCE [GENOMIC DNA]</scope>
    <source>
        <strain>ATCC 27634 / DSM 579 / HB8</strain>
    </source>
</reference>
<reference key="2">
    <citation type="submission" date="2004-11" db="EMBL/GenBank/DDBJ databases">
        <title>Complete genome sequence of Thermus thermophilus HB8.</title>
        <authorList>
            <person name="Masui R."/>
            <person name="Kurokawa K."/>
            <person name="Nakagawa N."/>
            <person name="Tokunaga F."/>
            <person name="Koyama Y."/>
            <person name="Shibata T."/>
            <person name="Oshima T."/>
            <person name="Yokoyama S."/>
            <person name="Yasunaga T."/>
            <person name="Kuramitsu S."/>
        </authorList>
    </citation>
    <scope>NUCLEOTIDE SEQUENCE [LARGE SCALE GENOMIC DNA]</scope>
    <source>
        <strain>ATCC 27634 / DSM 579 / HB8</strain>
    </source>
</reference>
<feature type="chain" id="PRO_0000118038" description="NADH-quinone oxidoreductase subunit 13">
    <location>
        <begin position="1"/>
        <end position="469"/>
    </location>
</feature>
<feature type="transmembrane region" description="Helical" evidence="1">
    <location>
        <begin position="1"/>
        <end position="21"/>
    </location>
</feature>
<feature type="transmembrane region" description="Helical" evidence="1">
    <location>
        <begin position="23"/>
        <end position="43"/>
    </location>
</feature>
<feature type="transmembrane region" description="Helical" evidence="1">
    <location>
        <begin position="47"/>
        <end position="67"/>
    </location>
</feature>
<feature type="transmembrane region" description="Helical" evidence="1">
    <location>
        <begin position="69"/>
        <end position="89"/>
    </location>
</feature>
<feature type="transmembrane region" description="Helical" evidence="1">
    <location>
        <begin position="91"/>
        <end position="111"/>
    </location>
</feature>
<feature type="transmembrane region" description="Helical" evidence="1">
    <location>
        <begin position="115"/>
        <end position="135"/>
    </location>
</feature>
<feature type="transmembrane region" description="Helical" evidence="1">
    <location>
        <begin position="144"/>
        <end position="164"/>
    </location>
</feature>
<feature type="transmembrane region" description="Helical" evidence="1">
    <location>
        <begin position="190"/>
        <end position="210"/>
    </location>
</feature>
<feature type="transmembrane region" description="Helical" evidence="1">
    <location>
        <begin position="258"/>
        <end position="278"/>
    </location>
</feature>
<feature type="transmembrane region" description="Helical" evidence="1">
    <location>
        <begin position="284"/>
        <end position="304"/>
    </location>
</feature>
<feature type="transmembrane region" description="Helical" evidence="1">
    <location>
        <begin position="308"/>
        <end position="328"/>
    </location>
</feature>
<feature type="transmembrane region" description="Helical" evidence="1">
    <location>
        <begin position="354"/>
        <end position="374"/>
    </location>
</feature>
<feature type="transmembrane region" description="Helical" evidence="1">
    <location>
        <begin position="390"/>
        <end position="410"/>
    </location>
</feature>
<feature type="transmembrane region" description="Helical" evidence="1">
    <location>
        <begin position="430"/>
        <end position="450"/>
    </location>
</feature>
<feature type="sequence conflict" description="In Ref. 1; AAA97950." evidence="2" ref="1">
    <original>A</original>
    <variation>D</variation>
    <location>
        <position position="166"/>
    </location>
</feature>
<feature type="sequence conflict" description="In Ref. 1; AAA97950." evidence="2" ref="1">
    <original>A</original>
    <variation>D</variation>
    <location>
        <position position="202"/>
    </location>
</feature>
<feature type="sequence conflict" description="In Ref. 1; AAA97950." evidence="2" ref="1">
    <original>A</original>
    <variation>D</variation>
    <location>
        <position position="240"/>
    </location>
</feature>
<feature type="sequence conflict" description="In Ref. 1; AAA97950." evidence="2" ref="1">
    <original>A</original>
    <variation>D</variation>
    <location>
        <position position="245"/>
    </location>
</feature>
<feature type="helix" evidence="6">
    <location>
        <begin position="2"/>
        <end position="17"/>
    </location>
</feature>
<feature type="helix" evidence="6">
    <location>
        <begin position="23"/>
        <end position="40"/>
    </location>
</feature>
<feature type="turn" evidence="6">
    <location>
        <begin position="46"/>
        <end position="49"/>
    </location>
</feature>
<feature type="strand" evidence="6">
    <location>
        <begin position="51"/>
        <end position="56"/>
    </location>
</feature>
<feature type="turn" evidence="6">
    <location>
        <begin position="57"/>
        <end position="60"/>
    </location>
</feature>
<feature type="strand" evidence="6">
    <location>
        <begin position="61"/>
        <end position="65"/>
    </location>
</feature>
<feature type="helix" evidence="6">
    <location>
        <begin position="69"/>
        <end position="87"/>
    </location>
</feature>
<feature type="helix" evidence="6">
    <location>
        <begin position="96"/>
        <end position="111"/>
    </location>
</feature>
<feature type="strand" evidence="4">
    <location>
        <begin position="112"/>
        <end position="114"/>
    </location>
</feature>
<feature type="helix" evidence="6">
    <location>
        <begin position="115"/>
        <end position="124"/>
    </location>
</feature>
<feature type="helix" evidence="6">
    <location>
        <begin position="126"/>
        <end position="134"/>
    </location>
</feature>
<feature type="helix" evidence="6">
    <location>
        <begin position="141"/>
        <end position="168"/>
    </location>
</feature>
<feature type="turn" evidence="6">
    <location>
        <begin position="169"/>
        <end position="171"/>
    </location>
</feature>
<feature type="strand" evidence="6">
    <location>
        <begin position="173"/>
        <end position="176"/>
    </location>
</feature>
<feature type="helix" evidence="6">
    <location>
        <begin position="177"/>
        <end position="182"/>
    </location>
</feature>
<feature type="turn" evidence="6">
    <location>
        <begin position="187"/>
        <end position="189"/>
    </location>
</feature>
<feature type="helix" evidence="6">
    <location>
        <begin position="190"/>
        <end position="203"/>
    </location>
</feature>
<feature type="turn" evidence="6">
    <location>
        <begin position="204"/>
        <end position="206"/>
    </location>
</feature>
<feature type="helix" evidence="6">
    <location>
        <begin position="208"/>
        <end position="210"/>
    </location>
</feature>
<feature type="helix" evidence="5">
    <location>
        <begin position="211"/>
        <end position="213"/>
    </location>
</feature>
<feature type="helix" evidence="6">
    <location>
        <begin position="214"/>
        <end position="220"/>
    </location>
</feature>
<feature type="helix" evidence="6">
    <location>
        <begin position="226"/>
        <end position="232"/>
    </location>
</feature>
<feature type="helix" evidence="6">
    <location>
        <begin position="237"/>
        <end position="243"/>
    </location>
</feature>
<feature type="helix" evidence="6">
    <location>
        <begin position="245"/>
        <end position="248"/>
    </location>
</feature>
<feature type="helix" evidence="6">
    <location>
        <begin position="250"/>
        <end position="277"/>
    </location>
</feature>
<feature type="helix" evidence="6">
    <location>
        <begin position="281"/>
        <end position="301"/>
    </location>
</feature>
<feature type="helix" evidence="6">
    <location>
        <begin position="305"/>
        <end position="336"/>
    </location>
</feature>
<feature type="strand" evidence="6">
    <location>
        <begin position="340"/>
        <end position="343"/>
    </location>
</feature>
<feature type="helix" evidence="6">
    <location>
        <begin position="347"/>
        <end position="350"/>
    </location>
</feature>
<feature type="helix" evidence="6">
    <location>
        <begin position="354"/>
        <end position="366"/>
    </location>
</feature>
<feature type="helix" evidence="6">
    <location>
        <begin position="373"/>
        <end position="387"/>
    </location>
</feature>
<feature type="helix" evidence="6">
    <location>
        <begin position="389"/>
        <end position="395"/>
    </location>
</feature>
<feature type="turn" evidence="6">
    <location>
        <begin position="396"/>
        <end position="398"/>
    </location>
</feature>
<feature type="helix" evidence="6">
    <location>
        <begin position="399"/>
        <end position="413"/>
    </location>
</feature>
<feature type="strand" evidence="3">
    <location>
        <begin position="416"/>
        <end position="418"/>
    </location>
</feature>
<feature type="helix" evidence="6">
    <location>
        <begin position="427"/>
        <end position="445"/>
    </location>
</feature>
<feature type="turn" evidence="6">
    <location>
        <begin position="447"/>
        <end position="453"/>
    </location>
</feature>
<feature type="helix" evidence="6">
    <location>
        <begin position="454"/>
        <end position="463"/>
    </location>
</feature>
<accession>Q56228</accession>
<accession>Q5SM47</accession>
<organism>
    <name type="scientific">Thermus thermophilus (strain ATCC 27634 / DSM 579 / HB8)</name>
    <dbReference type="NCBI Taxonomy" id="300852"/>
    <lineage>
        <taxon>Bacteria</taxon>
        <taxon>Thermotogati</taxon>
        <taxon>Deinococcota</taxon>
        <taxon>Deinococci</taxon>
        <taxon>Thermales</taxon>
        <taxon>Thermaceae</taxon>
        <taxon>Thermus</taxon>
    </lineage>
</organism>
<protein>
    <recommendedName>
        <fullName>NADH-quinone oxidoreductase subunit 13</fullName>
        <ecNumber>7.1.1.-</ecNumber>
    </recommendedName>
    <alternativeName>
        <fullName>NADH dehydrogenase I chain 13</fullName>
    </alternativeName>
    <alternativeName>
        <fullName>NDH-1 subunit 13</fullName>
    </alternativeName>
</protein>
<sequence>MVVLAVLLPVVFGALLLLGLPRALGVLGAGLSFLLNLYLFLTHPGGVAHAFQAPLLPGAGVYWAFGLDGLSALFFLTIALTVFLGALVARVEGRFLGLALLMEGLLLGLFAARDLLVFYVFFEAALIPALLMLYLYGGEGRTRALYTFVLFTLVGSLPMLAAVLGARLLSGSPTFLLEDLLAHPLQEEAAFWVFLGFALAFAIKTPLFPLHAWLPPFHQENHPSGLADALGTLYKVGVFAFFRFAIPLAPEGFAQAQGLLLFLAALSALYGAWVAFAAKDFKTLLAYAGLSHMGVAALGVFSGTPEGAMGGLYLLAASGVYTGGLFLLAGRLYERTGTLEIGRYRGLAQSAPGLAALALILFLAMVGLPGLSGFPGEFLTLLGAYKASPWLAALAFLSVIASAAYALTAFQKTFWEEGGSGVKDLAGAEWGFALLSVLALLLMGVFPGYFARGLHPLAEAFAKLLGGGA</sequence>
<name>NQO13_THET8</name>